<protein>
    <recommendedName>
        <fullName evidence="1">Large ribosomal subunit protein bL25</fullName>
    </recommendedName>
    <alternativeName>
        <fullName evidence="3">50S ribosomal protein L25</fullName>
    </alternativeName>
    <alternativeName>
        <fullName evidence="1">General stress protein CTC</fullName>
    </alternativeName>
</protein>
<accession>Q4L3F8</accession>
<keyword id="KW-0687">Ribonucleoprotein</keyword>
<keyword id="KW-0689">Ribosomal protein</keyword>
<keyword id="KW-0694">RNA-binding</keyword>
<keyword id="KW-0699">rRNA-binding</keyword>
<reference key="1">
    <citation type="journal article" date="2005" name="J. Bacteriol.">
        <title>Whole-genome sequencing of Staphylococcus haemolyticus uncovers the extreme plasticity of its genome and the evolution of human-colonizing staphylococcal species.</title>
        <authorList>
            <person name="Takeuchi F."/>
            <person name="Watanabe S."/>
            <person name="Baba T."/>
            <person name="Yuzawa H."/>
            <person name="Ito T."/>
            <person name="Morimoto Y."/>
            <person name="Kuroda M."/>
            <person name="Cui L."/>
            <person name="Takahashi M."/>
            <person name="Ankai A."/>
            <person name="Baba S."/>
            <person name="Fukui S."/>
            <person name="Lee J.C."/>
            <person name="Hiramatsu K."/>
        </authorList>
    </citation>
    <scope>NUCLEOTIDE SEQUENCE [LARGE SCALE GENOMIC DNA]</scope>
    <source>
        <strain>JCSC1435</strain>
    </source>
</reference>
<feature type="chain" id="PRO_0000181600" description="Large ribosomal subunit protein bL25">
    <location>
        <begin position="1"/>
        <end position="221"/>
    </location>
</feature>
<feature type="region of interest" description="Disordered" evidence="2">
    <location>
        <begin position="174"/>
        <end position="221"/>
    </location>
</feature>
<feature type="compositionally biased region" description="Acidic residues" evidence="2">
    <location>
        <begin position="184"/>
        <end position="221"/>
    </location>
</feature>
<proteinExistence type="inferred from homology"/>
<gene>
    <name evidence="1" type="primary">rplY</name>
    <name evidence="1" type="synonym">ctc</name>
    <name type="ordered locus">SH2510</name>
</gene>
<sequence>MASLKSIIRQGKQTRSDLKKLRNTGKVPAVVYGYGTKNTSVKVDEVEFIKVIREVGRNGVIDLGVGSKSIKVMVSDYQFDPLKNQITHIDFLAINMTEERTVDVPVHLVGEAAGAKEGGVVEQPLFDLQVTATPENIPESIEVDITELEVNDSYSVSDIKVSGDFTIENDPEESVVTVVPPTDEPTEEEVEAMEGEAATEEPEVVGEEKEEDSEEENKDEE</sequence>
<evidence type="ECO:0000255" key="1">
    <source>
        <dbReference type="HAMAP-Rule" id="MF_01334"/>
    </source>
</evidence>
<evidence type="ECO:0000256" key="2">
    <source>
        <dbReference type="SAM" id="MobiDB-lite"/>
    </source>
</evidence>
<evidence type="ECO:0000305" key="3"/>
<name>RL25_STAHJ</name>
<dbReference type="EMBL" id="AP006716">
    <property type="protein sequence ID" value="BAE05819.1"/>
    <property type="molecule type" value="Genomic_DNA"/>
</dbReference>
<dbReference type="RefSeq" id="WP_011276760.1">
    <property type="nucleotide sequence ID" value="NC_007168.1"/>
</dbReference>
<dbReference type="SMR" id="Q4L3F8"/>
<dbReference type="KEGG" id="sha:SH2510"/>
<dbReference type="eggNOG" id="COG1825">
    <property type="taxonomic scope" value="Bacteria"/>
</dbReference>
<dbReference type="HOGENOM" id="CLU_075939_2_1_9"/>
<dbReference type="OrthoDB" id="9790002at2"/>
<dbReference type="Proteomes" id="UP000000543">
    <property type="component" value="Chromosome"/>
</dbReference>
<dbReference type="GO" id="GO:0022625">
    <property type="term" value="C:cytosolic large ribosomal subunit"/>
    <property type="evidence" value="ECO:0007669"/>
    <property type="project" value="TreeGrafter"/>
</dbReference>
<dbReference type="GO" id="GO:0008097">
    <property type="term" value="F:5S rRNA binding"/>
    <property type="evidence" value="ECO:0007669"/>
    <property type="project" value="InterPro"/>
</dbReference>
<dbReference type="GO" id="GO:0003735">
    <property type="term" value="F:structural constituent of ribosome"/>
    <property type="evidence" value="ECO:0007669"/>
    <property type="project" value="InterPro"/>
</dbReference>
<dbReference type="GO" id="GO:0006412">
    <property type="term" value="P:translation"/>
    <property type="evidence" value="ECO:0007669"/>
    <property type="project" value="UniProtKB-UniRule"/>
</dbReference>
<dbReference type="CDD" id="cd00495">
    <property type="entry name" value="Ribosomal_L25_TL5_CTC"/>
    <property type="match status" value="1"/>
</dbReference>
<dbReference type="FunFam" id="2.40.240.10:FF:000013">
    <property type="entry name" value="50S ribosomal protein L25"/>
    <property type="match status" value="1"/>
</dbReference>
<dbReference type="Gene3D" id="2.170.120.20">
    <property type="entry name" value="Ribosomal protein L25, beta domain"/>
    <property type="match status" value="1"/>
</dbReference>
<dbReference type="Gene3D" id="2.40.240.10">
    <property type="entry name" value="Ribosomal Protein L25, Chain P"/>
    <property type="match status" value="1"/>
</dbReference>
<dbReference type="HAMAP" id="MF_01334">
    <property type="entry name" value="Ribosomal_bL25_CTC"/>
    <property type="match status" value="1"/>
</dbReference>
<dbReference type="InterPro" id="IPR020056">
    <property type="entry name" value="Rbsml_bL25/Gln-tRNA_synth_N"/>
</dbReference>
<dbReference type="InterPro" id="IPR011035">
    <property type="entry name" value="Ribosomal_bL25/Gln-tRNA_synth"/>
</dbReference>
<dbReference type="InterPro" id="IPR020057">
    <property type="entry name" value="Ribosomal_bL25_b-dom"/>
</dbReference>
<dbReference type="InterPro" id="IPR037121">
    <property type="entry name" value="Ribosomal_bL25_C"/>
</dbReference>
<dbReference type="InterPro" id="IPR001021">
    <property type="entry name" value="Ribosomal_bL25_long"/>
</dbReference>
<dbReference type="InterPro" id="IPR029751">
    <property type="entry name" value="Ribosomal_L25_dom"/>
</dbReference>
<dbReference type="InterPro" id="IPR020930">
    <property type="entry name" value="Ribosomal_uL5_bac-type"/>
</dbReference>
<dbReference type="NCBIfam" id="TIGR00731">
    <property type="entry name" value="bL25_bact_ctc"/>
    <property type="match status" value="1"/>
</dbReference>
<dbReference type="NCBIfam" id="NF004133">
    <property type="entry name" value="PRK05618.2-4"/>
    <property type="match status" value="1"/>
</dbReference>
<dbReference type="NCBIfam" id="NF004134">
    <property type="entry name" value="PRK05618.2-5"/>
    <property type="match status" value="1"/>
</dbReference>
<dbReference type="PANTHER" id="PTHR33284">
    <property type="entry name" value="RIBOSOMAL PROTEIN L25/GLN-TRNA SYNTHETASE, ANTI-CODON-BINDING DOMAIN-CONTAINING PROTEIN"/>
    <property type="match status" value="1"/>
</dbReference>
<dbReference type="PANTHER" id="PTHR33284:SF1">
    <property type="entry name" value="RIBOSOMAL PROTEIN L25_GLN-TRNA SYNTHETASE, ANTI-CODON-BINDING DOMAIN-CONTAINING PROTEIN"/>
    <property type="match status" value="1"/>
</dbReference>
<dbReference type="Pfam" id="PF01386">
    <property type="entry name" value="Ribosomal_L25p"/>
    <property type="match status" value="1"/>
</dbReference>
<dbReference type="Pfam" id="PF14693">
    <property type="entry name" value="Ribosomal_TL5_C"/>
    <property type="match status" value="1"/>
</dbReference>
<dbReference type="SUPFAM" id="SSF50715">
    <property type="entry name" value="Ribosomal protein L25-like"/>
    <property type="match status" value="1"/>
</dbReference>
<organism>
    <name type="scientific">Staphylococcus haemolyticus (strain JCSC1435)</name>
    <dbReference type="NCBI Taxonomy" id="279808"/>
    <lineage>
        <taxon>Bacteria</taxon>
        <taxon>Bacillati</taxon>
        <taxon>Bacillota</taxon>
        <taxon>Bacilli</taxon>
        <taxon>Bacillales</taxon>
        <taxon>Staphylococcaceae</taxon>
        <taxon>Staphylococcus</taxon>
    </lineage>
</organism>
<comment type="function">
    <text evidence="1">This is one of the proteins that binds to the 5S RNA in the ribosome where it forms part of the central protuberance.</text>
</comment>
<comment type="subunit">
    <text evidence="1">Part of the 50S ribosomal subunit; part of the 5S rRNA/L5/L18/L25 subcomplex. Contacts the 5S rRNA. Binds to the 5S rRNA independently of L5 and L18.</text>
</comment>
<comment type="similarity">
    <text evidence="1">Belongs to the bacterial ribosomal protein bL25 family. CTC subfamily.</text>
</comment>